<comment type="catalytic activity">
    <reaction evidence="1">
        <text>tRNA(Asn) + L-asparagine + ATP = L-asparaginyl-tRNA(Asn) + AMP + diphosphate + H(+)</text>
        <dbReference type="Rhea" id="RHEA:11180"/>
        <dbReference type="Rhea" id="RHEA-COMP:9659"/>
        <dbReference type="Rhea" id="RHEA-COMP:9674"/>
        <dbReference type="ChEBI" id="CHEBI:15378"/>
        <dbReference type="ChEBI" id="CHEBI:30616"/>
        <dbReference type="ChEBI" id="CHEBI:33019"/>
        <dbReference type="ChEBI" id="CHEBI:58048"/>
        <dbReference type="ChEBI" id="CHEBI:78442"/>
        <dbReference type="ChEBI" id="CHEBI:78515"/>
        <dbReference type="ChEBI" id="CHEBI:456215"/>
        <dbReference type="EC" id="6.1.1.22"/>
    </reaction>
</comment>
<comment type="subunit">
    <text evidence="1">Homodimer.</text>
</comment>
<comment type="subcellular location">
    <subcellularLocation>
        <location evidence="1">Cytoplasm</location>
    </subcellularLocation>
</comment>
<comment type="similarity">
    <text evidence="1">Belongs to the class-II aminoacyl-tRNA synthetase family.</text>
</comment>
<reference key="1">
    <citation type="journal article" date="2004" name="Proc. Natl. Acad. Sci. U.S.A.">
        <title>The genome sequence of the probiotic intestinal bacterium Lactobacillus johnsonii NCC 533.</title>
        <authorList>
            <person name="Pridmore R.D."/>
            <person name="Berger B."/>
            <person name="Desiere F."/>
            <person name="Vilanova D."/>
            <person name="Barretto C."/>
            <person name="Pittet A.-C."/>
            <person name="Zwahlen M.-C."/>
            <person name="Rouvet M."/>
            <person name="Altermann E."/>
            <person name="Barrangou R."/>
            <person name="Mollet B."/>
            <person name="Mercenier A."/>
            <person name="Klaenhammer T."/>
            <person name="Arigoni F."/>
            <person name="Schell M.A."/>
        </authorList>
    </citation>
    <scope>NUCLEOTIDE SEQUENCE [LARGE SCALE GENOMIC DNA]</scope>
    <source>
        <strain>CNCM I-1225 / La1 / NCC 533</strain>
    </source>
</reference>
<keyword id="KW-0030">Aminoacyl-tRNA synthetase</keyword>
<keyword id="KW-0067">ATP-binding</keyword>
<keyword id="KW-0963">Cytoplasm</keyword>
<keyword id="KW-0436">Ligase</keyword>
<keyword id="KW-0547">Nucleotide-binding</keyword>
<keyword id="KW-0648">Protein biosynthesis</keyword>
<evidence type="ECO:0000255" key="1">
    <source>
        <dbReference type="HAMAP-Rule" id="MF_00534"/>
    </source>
</evidence>
<accession>Q74JA9</accession>
<protein>
    <recommendedName>
        <fullName evidence="1">Asparagine--tRNA ligase</fullName>
        <ecNumber evidence="1">6.1.1.22</ecNumber>
    </recommendedName>
    <alternativeName>
        <fullName evidence="1">Asparaginyl-tRNA synthetase</fullName>
        <shortName evidence="1">AsnRS</shortName>
    </alternativeName>
</protein>
<organism>
    <name type="scientific">Lactobacillus johnsonii (strain CNCM I-12250 / La1 / NCC 533)</name>
    <dbReference type="NCBI Taxonomy" id="257314"/>
    <lineage>
        <taxon>Bacteria</taxon>
        <taxon>Bacillati</taxon>
        <taxon>Bacillota</taxon>
        <taxon>Bacilli</taxon>
        <taxon>Lactobacillales</taxon>
        <taxon>Lactobacillaceae</taxon>
        <taxon>Lactobacillus</taxon>
    </lineage>
</organism>
<sequence length="432" mass="50260">MTELISIKDSSKHVDQEVKMHVWLTDKRSSGKIIFLQLRDGTAFFQGVIRKNDVSEEVFEAAKSLRQEASFYITGTVHEDKRSHFGYEIQISDLEIVSNNEGYPIGNKEHGVDFLLDNRHLWLRSKRPFAIMQIRNTMFKATVDFFEKEGFIKFDAPIFMHSAPEGTTQLFHVEYFNNDAYLSQSGQLYGEAGAMAYGKIFTFGPTFRAEESKGRRHMTEFWMMEPEMAWMHQDESLDIQERYLAYMVKQVLENNEYELKILGRDPEKLRPTTEGNFTRLSYDDAIKMLQEAGRDIKWGDDFGAPDEGYISEQFDRPVFIVNYPTTIKPFYMKKNPDNPKEYLCADVIAPEGYGEIFGGSEREGNYEILKQQIEEAGLNLEDYQWYLDLRKFGGVPHSGFGMGFERTIAWICKLDHIREAIPFPRLINRMQP</sequence>
<dbReference type="EC" id="6.1.1.22" evidence="1"/>
<dbReference type="EMBL" id="AE017198">
    <property type="protein sequence ID" value="AAS09021.1"/>
    <property type="molecule type" value="Genomic_DNA"/>
</dbReference>
<dbReference type="RefSeq" id="WP_004897299.1">
    <property type="nucleotide sequence ID" value="NC_005362.1"/>
</dbReference>
<dbReference type="SMR" id="Q74JA9"/>
<dbReference type="GeneID" id="83570363"/>
<dbReference type="KEGG" id="ljo:LJ_1200"/>
<dbReference type="eggNOG" id="COG0017">
    <property type="taxonomic scope" value="Bacteria"/>
</dbReference>
<dbReference type="HOGENOM" id="CLU_004553_2_0_9"/>
<dbReference type="Proteomes" id="UP000000581">
    <property type="component" value="Chromosome"/>
</dbReference>
<dbReference type="GO" id="GO:0005737">
    <property type="term" value="C:cytoplasm"/>
    <property type="evidence" value="ECO:0007669"/>
    <property type="project" value="UniProtKB-SubCell"/>
</dbReference>
<dbReference type="GO" id="GO:0004816">
    <property type="term" value="F:asparagine-tRNA ligase activity"/>
    <property type="evidence" value="ECO:0007669"/>
    <property type="project" value="UniProtKB-UniRule"/>
</dbReference>
<dbReference type="GO" id="GO:0005524">
    <property type="term" value="F:ATP binding"/>
    <property type="evidence" value="ECO:0007669"/>
    <property type="project" value="UniProtKB-UniRule"/>
</dbReference>
<dbReference type="GO" id="GO:0140096">
    <property type="term" value="F:catalytic activity, acting on a protein"/>
    <property type="evidence" value="ECO:0007669"/>
    <property type="project" value="UniProtKB-ARBA"/>
</dbReference>
<dbReference type="GO" id="GO:0003676">
    <property type="term" value="F:nucleic acid binding"/>
    <property type="evidence" value="ECO:0007669"/>
    <property type="project" value="InterPro"/>
</dbReference>
<dbReference type="GO" id="GO:0016740">
    <property type="term" value="F:transferase activity"/>
    <property type="evidence" value="ECO:0007669"/>
    <property type="project" value="UniProtKB-ARBA"/>
</dbReference>
<dbReference type="GO" id="GO:0006421">
    <property type="term" value="P:asparaginyl-tRNA aminoacylation"/>
    <property type="evidence" value="ECO:0007669"/>
    <property type="project" value="UniProtKB-UniRule"/>
</dbReference>
<dbReference type="CDD" id="cd04323">
    <property type="entry name" value="AsnRS_cyto_like_N"/>
    <property type="match status" value="1"/>
</dbReference>
<dbReference type="CDD" id="cd00776">
    <property type="entry name" value="AsxRS_core"/>
    <property type="match status" value="1"/>
</dbReference>
<dbReference type="Gene3D" id="3.30.930.10">
    <property type="entry name" value="Bira Bifunctional Protein, Domain 2"/>
    <property type="match status" value="1"/>
</dbReference>
<dbReference type="Gene3D" id="2.40.50.140">
    <property type="entry name" value="Nucleic acid-binding proteins"/>
    <property type="match status" value="1"/>
</dbReference>
<dbReference type="HAMAP" id="MF_00534">
    <property type="entry name" value="Asn_tRNA_synth"/>
    <property type="match status" value="1"/>
</dbReference>
<dbReference type="InterPro" id="IPR004364">
    <property type="entry name" value="Aa-tRNA-synt_II"/>
</dbReference>
<dbReference type="InterPro" id="IPR006195">
    <property type="entry name" value="aa-tRNA-synth_II"/>
</dbReference>
<dbReference type="InterPro" id="IPR045864">
    <property type="entry name" value="aa-tRNA-synth_II/BPL/LPL"/>
</dbReference>
<dbReference type="InterPro" id="IPR004522">
    <property type="entry name" value="Asn-tRNA-ligase"/>
</dbReference>
<dbReference type="InterPro" id="IPR002312">
    <property type="entry name" value="Asp/Asn-tRNA-synth_IIb"/>
</dbReference>
<dbReference type="InterPro" id="IPR012340">
    <property type="entry name" value="NA-bd_OB-fold"/>
</dbReference>
<dbReference type="InterPro" id="IPR004365">
    <property type="entry name" value="NA-bd_OB_tRNA"/>
</dbReference>
<dbReference type="NCBIfam" id="TIGR00457">
    <property type="entry name" value="asnS"/>
    <property type="match status" value="1"/>
</dbReference>
<dbReference type="NCBIfam" id="NF003037">
    <property type="entry name" value="PRK03932.1"/>
    <property type="match status" value="1"/>
</dbReference>
<dbReference type="PANTHER" id="PTHR22594:SF34">
    <property type="entry name" value="ASPARAGINE--TRNA LIGASE, MITOCHONDRIAL-RELATED"/>
    <property type="match status" value="1"/>
</dbReference>
<dbReference type="PANTHER" id="PTHR22594">
    <property type="entry name" value="ASPARTYL/LYSYL-TRNA SYNTHETASE"/>
    <property type="match status" value="1"/>
</dbReference>
<dbReference type="Pfam" id="PF00152">
    <property type="entry name" value="tRNA-synt_2"/>
    <property type="match status" value="1"/>
</dbReference>
<dbReference type="Pfam" id="PF01336">
    <property type="entry name" value="tRNA_anti-codon"/>
    <property type="match status" value="1"/>
</dbReference>
<dbReference type="PRINTS" id="PR01042">
    <property type="entry name" value="TRNASYNTHASP"/>
</dbReference>
<dbReference type="SUPFAM" id="SSF55681">
    <property type="entry name" value="Class II aaRS and biotin synthetases"/>
    <property type="match status" value="1"/>
</dbReference>
<dbReference type="SUPFAM" id="SSF50249">
    <property type="entry name" value="Nucleic acid-binding proteins"/>
    <property type="match status" value="1"/>
</dbReference>
<dbReference type="PROSITE" id="PS50862">
    <property type="entry name" value="AA_TRNA_LIGASE_II"/>
    <property type="match status" value="1"/>
</dbReference>
<proteinExistence type="inferred from homology"/>
<feature type="chain" id="PRO_0000176416" description="Asparagine--tRNA ligase">
    <location>
        <begin position="1"/>
        <end position="432"/>
    </location>
</feature>
<name>SYN_LACJO</name>
<gene>
    <name evidence="1" type="primary">asnS</name>
    <name type="ordered locus">LJ_1200</name>
</gene>